<comment type="function">
    <text evidence="1">Catalyzes the ATP-dependent amination of UTP to CTP with either L-glutamine or ammonia as the source of nitrogen. Regulates intracellular CTP levels through interactions with the four ribonucleotide triphosphates.</text>
</comment>
<comment type="catalytic activity">
    <reaction evidence="1">
        <text>UTP + L-glutamine + ATP + H2O = CTP + L-glutamate + ADP + phosphate + 2 H(+)</text>
        <dbReference type="Rhea" id="RHEA:26426"/>
        <dbReference type="ChEBI" id="CHEBI:15377"/>
        <dbReference type="ChEBI" id="CHEBI:15378"/>
        <dbReference type="ChEBI" id="CHEBI:29985"/>
        <dbReference type="ChEBI" id="CHEBI:30616"/>
        <dbReference type="ChEBI" id="CHEBI:37563"/>
        <dbReference type="ChEBI" id="CHEBI:43474"/>
        <dbReference type="ChEBI" id="CHEBI:46398"/>
        <dbReference type="ChEBI" id="CHEBI:58359"/>
        <dbReference type="ChEBI" id="CHEBI:456216"/>
        <dbReference type="EC" id="6.3.4.2"/>
    </reaction>
</comment>
<comment type="catalytic activity">
    <reaction evidence="1">
        <text>L-glutamine + H2O = L-glutamate + NH4(+)</text>
        <dbReference type="Rhea" id="RHEA:15889"/>
        <dbReference type="ChEBI" id="CHEBI:15377"/>
        <dbReference type="ChEBI" id="CHEBI:28938"/>
        <dbReference type="ChEBI" id="CHEBI:29985"/>
        <dbReference type="ChEBI" id="CHEBI:58359"/>
    </reaction>
</comment>
<comment type="catalytic activity">
    <reaction evidence="1">
        <text>UTP + NH4(+) + ATP = CTP + ADP + phosphate + 2 H(+)</text>
        <dbReference type="Rhea" id="RHEA:16597"/>
        <dbReference type="ChEBI" id="CHEBI:15378"/>
        <dbReference type="ChEBI" id="CHEBI:28938"/>
        <dbReference type="ChEBI" id="CHEBI:30616"/>
        <dbReference type="ChEBI" id="CHEBI:37563"/>
        <dbReference type="ChEBI" id="CHEBI:43474"/>
        <dbReference type="ChEBI" id="CHEBI:46398"/>
        <dbReference type="ChEBI" id="CHEBI:456216"/>
    </reaction>
</comment>
<comment type="activity regulation">
    <text evidence="1">Allosterically activated by GTP, when glutamine is the substrate; GTP has no effect on the reaction when ammonia is the substrate. The allosteric effector GTP functions by stabilizing the protein conformation that binds the tetrahedral intermediate(s) formed during glutamine hydrolysis. Inhibited by the product CTP, via allosteric rather than competitive inhibition.</text>
</comment>
<comment type="pathway">
    <text evidence="1">Pyrimidine metabolism; CTP biosynthesis via de novo pathway; CTP from UDP: step 2/2.</text>
</comment>
<comment type="subunit">
    <text evidence="1">Homotetramer.</text>
</comment>
<comment type="miscellaneous">
    <text evidence="1">CTPSs have evolved a hybrid strategy for distinguishing between UTP and CTP. The overlapping regions of the product feedback inhibitory and substrate sites recognize a common feature in both compounds, the triphosphate moiety. To differentiate isosteric substrate and product pyrimidine rings, an additional pocket far from the expected kinase/ligase catalytic site, specifically recognizes the cytosine and ribose portions of the product inhibitor.</text>
</comment>
<comment type="similarity">
    <text evidence="1">Belongs to the CTP synthase family.</text>
</comment>
<keyword id="KW-0067">ATP-binding</keyword>
<keyword id="KW-0315">Glutamine amidotransferase</keyword>
<keyword id="KW-0436">Ligase</keyword>
<keyword id="KW-0460">Magnesium</keyword>
<keyword id="KW-0479">Metal-binding</keyword>
<keyword id="KW-0547">Nucleotide-binding</keyword>
<keyword id="KW-0665">Pyrimidine biosynthesis</keyword>
<evidence type="ECO:0000255" key="1">
    <source>
        <dbReference type="HAMAP-Rule" id="MF_01227"/>
    </source>
</evidence>
<feature type="chain" id="PRO_0000411475" description="CTP synthase">
    <location>
        <begin position="1"/>
        <end position="534"/>
    </location>
</feature>
<feature type="domain" description="Glutamine amidotransferase type-1" evidence="1">
    <location>
        <begin position="292"/>
        <end position="534"/>
    </location>
</feature>
<feature type="region of interest" description="Amidoligase domain" evidence="1">
    <location>
        <begin position="1"/>
        <end position="267"/>
    </location>
</feature>
<feature type="active site" description="Nucleophile; for glutamine hydrolysis" evidence="1">
    <location>
        <position position="381"/>
    </location>
</feature>
<feature type="active site" evidence="1">
    <location>
        <position position="508"/>
    </location>
</feature>
<feature type="active site" evidence="1">
    <location>
        <position position="510"/>
    </location>
</feature>
<feature type="binding site" evidence="1">
    <location>
        <position position="13"/>
    </location>
    <ligand>
        <name>CTP</name>
        <dbReference type="ChEBI" id="CHEBI:37563"/>
        <note>allosteric inhibitor</note>
    </ligand>
</feature>
<feature type="binding site" evidence="1">
    <location>
        <position position="13"/>
    </location>
    <ligand>
        <name>UTP</name>
        <dbReference type="ChEBI" id="CHEBI:46398"/>
    </ligand>
</feature>
<feature type="binding site" evidence="1">
    <location>
        <begin position="14"/>
        <end position="19"/>
    </location>
    <ligand>
        <name>ATP</name>
        <dbReference type="ChEBI" id="CHEBI:30616"/>
    </ligand>
</feature>
<feature type="binding site" evidence="1">
    <location>
        <position position="54"/>
    </location>
    <ligand>
        <name>L-glutamine</name>
        <dbReference type="ChEBI" id="CHEBI:58359"/>
    </ligand>
</feature>
<feature type="binding site" evidence="1">
    <location>
        <position position="71"/>
    </location>
    <ligand>
        <name>ATP</name>
        <dbReference type="ChEBI" id="CHEBI:30616"/>
    </ligand>
</feature>
<feature type="binding site" evidence="1">
    <location>
        <position position="71"/>
    </location>
    <ligand>
        <name>Mg(2+)</name>
        <dbReference type="ChEBI" id="CHEBI:18420"/>
    </ligand>
</feature>
<feature type="binding site" evidence="1">
    <location>
        <position position="141"/>
    </location>
    <ligand>
        <name>Mg(2+)</name>
        <dbReference type="ChEBI" id="CHEBI:18420"/>
    </ligand>
</feature>
<feature type="binding site" evidence="1">
    <location>
        <begin position="148"/>
        <end position="150"/>
    </location>
    <ligand>
        <name>CTP</name>
        <dbReference type="ChEBI" id="CHEBI:37563"/>
        <note>allosteric inhibitor</note>
    </ligand>
</feature>
<feature type="binding site" evidence="1">
    <location>
        <begin position="188"/>
        <end position="193"/>
    </location>
    <ligand>
        <name>CTP</name>
        <dbReference type="ChEBI" id="CHEBI:37563"/>
        <note>allosteric inhibitor</note>
    </ligand>
</feature>
<feature type="binding site" evidence="1">
    <location>
        <begin position="188"/>
        <end position="193"/>
    </location>
    <ligand>
        <name>UTP</name>
        <dbReference type="ChEBI" id="CHEBI:46398"/>
    </ligand>
</feature>
<feature type="binding site" evidence="1">
    <location>
        <position position="224"/>
    </location>
    <ligand>
        <name>CTP</name>
        <dbReference type="ChEBI" id="CHEBI:37563"/>
        <note>allosteric inhibitor</note>
    </ligand>
</feature>
<feature type="binding site" evidence="1">
    <location>
        <position position="224"/>
    </location>
    <ligand>
        <name>UTP</name>
        <dbReference type="ChEBI" id="CHEBI:46398"/>
    </ligand>
</feature>
<feature type="binding site" evidence="1">
    <location>
        <begin position="240"/>
        <end position="242"/>
    </location>
    <ligand>
        <name>ATP</name>
        <dbReference type="ChEBI" id="CHEBI:30616"/>
    </ligand>
</feature>
<feature type="binding site" evidence="1">
    <location>
        <position position="354"/>
    </location>
    <ligand>
        <name>L-glutamine</name>
        <dbReference type="ChEBI" id="CHEBI:58359"/>
    </ligand>
</feature>
<feature type="binding site" evidence="1">
    <location>
        <begin position="382"/>
        <end position="385"/>
    </location>
    <ligand>
        <name>L-glutamine</name>
        <dbReference type="ChEBI" id="CHEBI:58359"/>
    </ligand>
</feature>
<feature type="binding site" evidence="1">
    <location>
        <position position="405"/>
    </location>
    <ligand>
        <name>L-glutamine</name>
        <dbReference type="ChEBI" id="CHEBI:58359"/>
    </ligand>
</feature>
<feature type="binding site" evidence="1">
    <location>
        <position position="463"/>
    </location>
    <ligand>
        <name>L-glutamine</name>
        <dbReference type="ChEBI" id="CHEBI:58359"/>
    </ligand>
</feature>
<proteinExistence type="inferred from homology"/>
<organism>
    <name type="scientific">Streptococcus pyogenes serotype M3 (strain SSI-1)</name>
    <dbReference type="NCBI Taxonomy" id="193567"/>
    <lineage>
        <taxon>Bacteria</taxon>
        <taxon>Bacillati</taxon>
        <taxon>Bacillota</taxon>
        <taxon>Bacilli</taxon>
        <taxon>Lactobacillales</taxon>
        <taxon>Streptococcaceae</taxon>
        <taxon>Streptococcus</taxon>
    </lineage>
</organism>
<protein>
    <recommendedName>
        <fullName evidence="1">CTP synthase</fullName>
        <ecNumber evidence="1">6.3.4.2</ecNumber>
    </recommendedName>
    <alternativeName>
        <fullName evidence="1">Cytidine 5'-triphosphate synthase</fullName>
    </alternativeName>
    <alternativeName>
        <fullName evidence="1">Cytidine triphosphate synthetase</fullName>
        <shortName evidence="1">CTP synthetase</shortName>
        <shortName evidence="1">CTPS</shortName>
    </alternativeName>
    <alternativeName>
        <fullName evidence="1">UTP--ammonia ligase</fullName>
    </alternativeName>
</protein>
<accession>P0DD71</accession>
<accession>P65926</accession>
<accession>Q99Y33</accession>
<reference key="1">
    <citation type="journal article" date="2003" name="Genome Res.">
        <title>Genome sequence of an M3 strain of Streptococcus pyogenes reveals a large-scale genomic rearrangement in invasive strains and new insights into phage evolution.</title>
        <authorList>
            <person name="Nakagawa I."/>
            <person name="Kurokawa K."/>
            <person name="Yamashita A."/>
            <person name="Nakata M."/>
            <person name="Tomiyasu Y."/>
            <person name="Okahashi N."/>
            <person name="Kawabata S."/>
            <person name="Yamazaki K."/>
            <person name="Shiba T."/>
            <person name="Yasunaga T."/>
            <person name="Hayashi H."/>
            <person name="Hattori M."/>
            <person name="Hamada S."/>
        </authorList>
    </citation>
    <scope>NUCLEOTIDE SEQUENCE [LARGE SCALE GENOMIC DNA]</scope>
    <source>
        <strain>SSI-1</strain>
    </source>
</reference>
<gene>
    <name evidence="1" type="primary">pyrG</name>
    <name type="ordered locus">SPs0234</name>
</gene>
<name>PYRG_STRPQ</name>
<dbReference type="EC" id="6.3.4.2" evidence="1"/>
<dbReference type="EMBL" id="BA000034">
    <property type="protein sequence ID" value="BAC63329.1"/>
    <property type="molecule type" value="Genomic_DNA"/>
</dbReference>
<dbReference type="RefSeq" id="WP_002988149.1">
    <property type="nucleotide sequence ID" value="NC_004606.1"/>
</dbReference>
<dbReference type="SMR" id="P0DD71"/>
<dbReference type="KEGG" id="sps:SPs0234"/>
<dbReference type="HOGENOM" id="CLU_011675_5_0_9"/>
<dbReference type="UniPathway" id="UPA00159">
    <property type="reaction ID" value="UER00277"/>
</dbReference>
<dbReference type="GO" id="GO:0005829">
    <property type="term" value="C:cytosol"/>
    <property type="evidence" value="ECO:0007669"/>
    <property type="project" value="TreeGrafter"/>
</dbReference>
<dbReference type="GO" id="GO:0005524">
    <property type="term" value="F:ATP binding"/>
    <property type="evidence" value="ECO:0007669"/>
    <property type="project" value="UniProtKB-KW"/>
</dbReference>
<dbReference type="GO" id="GO:0003883">
    <property type="term" value="F:CTP synthase activity"/>
    <property type="evidence" value="ECO:0007669"/>
    <property type="project" value="UniProtKB-UniRule"/>
</dbReference>
<dbReference type="GO" id="GO:0004359">
    <property type="term" value="F:glutaminase activity"/>
    <property type="evidence" value="ECO:0007669"/>
    <property type="project" value="RHEA"/>
</dbReference>
<dbReference type="GO" id="GO:0042802">
    <property type="term" value="F:identical protein binding"/>
    <property type="evidence" value="ECO:0007669"/>
    <property type="project" value="TreeGrafter"/>
</dbReference>
<dbReference type="GO" id="GO:0046872">
    <property type="term" value="F:metal ion binding"/>
    <property type="evidence" value="ECO:0007669"/>
    <property type="project" value="UniProtKB-KW"/>
</dbReference>
<dbReference type="GO" id="GO:0044210">
    <property type="term" value="P:'de novo' CTP biosynthetic process"/>
    <property type="evidence" value="ECO:0007669"/>
    <property type="project" value="UniProtKB-UniRule"/>
</dbReference>
<dbReference type="GO" id="GO:0019856">
    <property type="term" value="P:pyrimidine nucleobase biosynthetic process"/>
    <property type="evidence" value="ECO:0007669"/>
    <property type="project" value="TreeGrafter"/>
</dbReference>
<dbReference type="CDD" id="cd03113">
    <property type="entry name" value="CTPS_N"/>
    <property type="match status" value="1"/>
</dbReference>
<dbReference type="CDD" id="cd01746">
    <property type="entry name" value="GATase1_CTP_Synthase"/>
    <property type="match status" value="1"/>
</dbReference>
<dbReference type="FunFam" id="3.40.50.300:FF:000009">
    <property type="entry name" value="CTP synthase"/>
    <property type="match status" value="1"/>
</dbReference>
<dbReference type="FunFam" id="3.40.50.880:FF:000002">
    <property type="entry name" value="CTP synthase"/>
    <property type="match status" value="1"/>
</dbReference>
<dbReference type="Gene3D" id="3.40.50.880">
    <property type="match status" value="1"/>
</dbReference>
<dbReference type="Gene3D" id="3.40.50.300">
    <property type="entry name" value="P-loop containing nucleotide triphosphate hydrolases"/>
    <property type="match status" value="1"/>
</dbReference>
<dbReference type="HAMAP" id="MF_01227">
    <property type="entry name" value="PyrG"/>
    <property type="match status" value="1"/>
</dbReference>
<dbReference type="InterPro" id="IPR029062">
    <property type="entry name" value="Class_I_gatase-like"/>
</dbReference>
<dbReference type="InterPro" id="IPR004468">
    <property type="entry name" value="CTP_synthase"/>
</dbReference>
<dbReference type="InterPro" id="IPR017456">
    <property type="entry name" value="CTP_synthase_N"/>
</dbReference>
<dbReference type="InterPro" id="IPR017926">
    <property type="entry name" value="GATASE"/>
</dbReference>
<dbReference type="InterPro" id="IPR033828">
    <property type="entry name" value="GATase1_CTP_Synthase"/>
</dbReference>
<dbReference type="InterPro" id="IPR027417">
    <property type="entry name" value="P-loop_NTPase"/>
</dbReference>
<dbReference type="NCBIfam" id="NF003792">
    <property type="entry name" value="PRK05380.1"/>
    <property type="match status" value="1"/>
</dbReference>
<dbReference type="NCBIfam" id="TIGR00337">
    <property type="entry name" value="PyrG"/>
    <property type="match status" value="1"/>
</dbReference>
<dbReference type="PANTHER" id="PTHR11550">
    <property type="entry name" value="CTP SYNTHASE"/>
    <property type="match status" value="1"/>
</dbReference>
<dbReference type="PANTHER" id="PTHR11550:SF0">
    <property type="entry name" value="CTP SYNTHASE-RELATED"/>
    <property type="match status" value="1"/>
</dbReference>
<dbReference type="Pfam" id="PF06418">
    <property type="entry name" value="CTP_synth_N"/>
    <property type="match status" value="1"/>
</dbReference>
<dbReference type="Pfam" id="PF00117">
    <property type="entry name" value="GATase"/>
    <property type="match status" value="1"/>
</dbReference>
<dbReference type="SUPFAM" id="SSF52317">
    <property type="entry name" value="Class I glutamine amidotransferase-like"/>
    <property type="match status" value="1"/>
</dbReference>
<dbReference type="SUPFAM" id="SSF52540">
    <property type="entry name" value="P-loop containing nucleoside triphosphate hydrolases"/>
    <property type="match status" value="1"/>
</dbReference>
<dbReference type="PROSITE" id="PS51273">
    <property type="entry name" value="GATASE_TYPE_1"/>
    <property type="match status" value="1"/>
</dbReference>
<sequence length="534" mass="59507">MTKYIFVTGGVVSSIGKGIVAASLGRLLKNRGLKVTIQKFDPYINIDPGTMSPYQHGEVYVTDDGAETDLDLGHYERFIDINLNKYSNVTTGKIYSEVLRKERKGEYLGATVQVIPHITDALKEKIKRAASTTDSDVIITEVGGTVGDIESLPFLEALRQMKADVGSENVMYIHTTLLPYLKAAGEMKTKPTQHSVKELRGLGIQPNMLVIRTEEPVEQGIKNKLAQFCDVNSEAVIESRDVEHLYQIPLNLQAQSMDQIVCDHLKLNAPQADMTEWSAMVDKVMNLRKTTKIALVGKYVELPDAYLSVVEALKHSGYANDTAIDLKWVNANDVTVDNAADLLGDADGIIVPGGFGQRGTEGKIQAIRYARENDVPMLGICLGMQLTCVEFARHVLNMEGANSFELEPSTKYPIIDIMRDQIDIEDMGGTLRLGLYPCKLKPGSKAAMAYNNQEVVQRRHRHRYEFNNKFRPEFEAAGFVFSGVSPDNRLVEIVELKEKKFFVAAQYHPELQSRPNRPEELYTAFVTAAIKNSN</sequence>